<comment type="function">
    <text evidence="1">F(1)F(0) ATP synthase produces ATP from ADP in the presence of a proton or sodium gradient. F-type ATPases consist of two structural domains, F(1) containing the extramembraneous catalytic core and F(0) containing the membrane proton channel, linked together by a central stalk and a peripheral stalk. During catalysis, ATP synthesis in the catalytic domain of F(1) is coupled via a rotary mechanism of the central stalk subunits to proton translocation.</text>
</comment>
<comment type="function">
    <text evidence="1">Key component of the F(0) channel; it plays a direct role in translocation across the membrane. A homomeric c-ring of between 10-14 subunits forms the central stalk rotor element with the F(1) delta and epsilon subunits.</text>
</comment>
<comment type="subunit">
    <text evidence="1">F-type ATPases have 2 components, F(1) - the catalytic core - and F(0) - the membrane proton channel. F(1) has five subunits: alpha(3), beta(3), gamma(1), delta(1), epsilon(1). F(0) has three main subunits: a(1), b(2) and c(10-14). The alpha and beta chains form an alternating ring which encloses part of the gamma chain. F(1) is attached to F(0) by a central stalk formed by the gamma and epsilon chains, while a peripheral stalk is formed by the delta and b chains.</text>
</comment>
<comment type="subcellular location">
    <subcellularLocation>
        <location evidence="1">Cell membrane</location>
        <topology evidence="1">Multi-pass membrane protein</topology>
    </subcellularLocation>
</comment>
<comment type="similarity">
    <text evidence="1">Belongs to the ATPase C chain family.</text>
</comment>
<keyword id="KW-0066">ATP synthesis</keyword>
<keyword id="KW-1003">Cell membrane</keyword>
<keyword id="KW-0138">CF(0)</keyword>
<keyword id="KW-0375">Hydrogen ion transport</keyword>
<keyword id="KW-0406">Ion transport</keyword>
<keyword id="KW-0446">Lipid-binding</keyword>
<keyword id="KW-0472">Membrane</keyword>
<keyword id="KW-1185">Reference proteome</keyword>
<keyword id="KW-0812">Transmembrane</keyword>
<keyword id="KW-1133">Transmembrane helix</keyword>
<keyword id="KW-0813">Transport</keyword>
<sequence length="70" mass="7019">MGAIAAGIAMAGAAIGGGVGDGIVISKMLEGMARQPELSGQLRTNMFIGVGLVEAMPIIAFVVALMVMNK</sequence>
<feature type="chain" id="PRO_1000184401" description="ATP synthase subunit c">
    <location>
        <begin position="1"/>
        <end position="70"/>
    </location>
</feature>
<feature type="transmembrane region" description="Helical" evidence="1">
    <location>
        <begin position="4"/>
        <end position="24"/>
    </location>
</feature>
<feature type="transmembrane region" description="Helical" evidence="1">
    <location>
        <begin position="47"/>
        <end position="67"/>
    </location>
</feature>
<feature type="site" description="Reversibly protonated during proton transport" evidence="1">
    <location>
        <position position="54"/>
    </location>
</feature>
<name>ATPL_LEVBA</name>
<dbReference type="EMBL" id="CP000416">
    <property type="protein sequence ID" value="ABJ64389.1"/>
    <property type="molecule type" value="Genomic_DNA"/>
</dbReference>
<dbReference type="RefSeq" id="WP_011668153.1">
    <property type="nucleotide sequence ID" value="NC_008497.1"/>
</dbReference>
<dbReference type="SMR" id="Q03QY3"/>
<dbReference type="STRING" id="387344.LVIS_1284"/>
<dbReference type="GeneID" id="56992568"/>
<dbReference type="KEGG" id="lbr:LVIS_1284"/>
<dbReference type="eggNOG" id="COG0636">
    <property type="taxonomic scope" value="Bacteria"/>
</dbReference>
<dbReference type="HOGENOM" id="CLU_148047_1_1_9"/>
<dbReference type="Proteomes" id="UP000001652">
    <property type="component" value="Chromosome"/>
</dbReference>
<dbReference type="GO" id="GO:0005886">
    <property type="term" value="C:plasma membrane"/>
    <property type="evidence" value="ECO:0007669"/>
    <property type="project" value="UniProtKB-SubCell"/>
</dbReference>
<dbReference type="GO" id="GO:0045259">
    <property type="term" value="C:proton-transporting ATP synthase complex"/>
    <property type="evidence" value="ECO:0007669"/>
    <property type="project" value="UniProtKB-KW"/>
</dbReference>
<dbReference type="GO" id="GO:0033177">
    <property type="term" value="C:proton-transporting two-sector ATPase complex, proton-transporting domain"/>
    <property type="evidence" value="ECO:0007669"/>
    <property type="project" value="InterPro"/>
</dbReference>
<dbReference type="GO" id="GO:0008289">
    <property type="term" value="F:lipid binding"/>
    <property type="evidence" value="ECO:0007669"/>
    <property type="project" value="UniProtKB-KW"/>
</dbReference>
<dbReference type="GO" id="GO:0046933">
    <property type="term" value="F:proton-transporting ATP synthase activity, rotational mechanism"/>
    <property type="evidence" value="ECO:0007669"/>
    <property type="project" value="UniProtKB-UniRule"/>
</dbReference>
<dbReference type="CDD" id="cd18185">
    <property type="entry name" value="ATP-synt_Fo_c_ATPE"/>
    <property type="match status" value="1"/>
</dbReference>
<dbReference type="FunFam" id="1.20.20.10:FF:000004">
    <property type="entry name" value="ATP synthase subunit c"/>
    <property type="match status" value="1"/>
</dbReference>
<dbReference type="Gene3D" id="1.20.20.10">
    <property type="entry name" value="F1F0 ATP synthase subunit C"/>
    <property type="match status" value="1"/>
</dbReference>
<dbReference type="HAMAP" id="MF_01396">
    <property type="entry name" value="ATP_synth_c_bact"/>
    <property type="match status" value="1"/>
</dbReference>
<dbReference type="InterPro" id="IPR005953">
    <property type="entry name" value="ATP_synth_csu_bac/chlpt"/>
</dbReference>
<dbReference type="InterPro" id="IPR000454">
    <property type="entry name" value="ATP_synth_F0_csu"/>
</dbReference>
<dbReference type="InterPro" id="IPR020537">
    <property type="entry name" value="ATP_synth_F0_csu_DDCD_BS"/>
</dbReference>
<dbReference type="InterPro" id="IPR038662">
    <property type="entry name" value="ATP_synth_F0_csu_sf"/>
</dbReference>
<dbReference type="InterPro" id="IPR002379">
    <property type="entry name" value="ATPase_proteolipid_c-like_dom"/>
</dbReference>
<dbReference type="InterPro" id="IPR035921">
    <property type="entry name" value="F/V-ATP_Csub_sf"/>
</dbReference>
<dbReference type="NCBIfam" id="TIGR01260">
    <property type="entry name" value="ATP_synt_c"/>
    <property type="match status" value="1"/>
</dbReference>
<dbReference type="NCBIfam" id="NF005363">
    <property type="entry name" value="PRK06876.1"/>
    <property type="match status" value="1"/>
</dbReference>
<dbReference type="PANTHER" id="PTHR10031">
    <property type="entry name" value="ATP SYNTHASE LIPID-BINDING PROTEIN, MITOCHONDRIAL"/>
    <property type="match status" value="1"/>
</dbReference>
<dbReference type="PANTHER" id="PTHR10031:SF0">
    <property type="entry name" value="ATPASE PROTEIN 9"/>
    <property type="match status" value="1"/>
</dbReference>
<dbReference type="Pfam" id="PF00137">
    <property type="entry name" value="ATP-synt_C"/>
    <property type="match status" value="1"/>
</dbReference>
<dbReference type="PRINTS" id="PR00124">
    <property type="entry name" value="ATPASEC"/>
</dbReference>
<dbReference type="SUPFAM" id="SSF81333">
    <property type="entry name" value="F1F0 ATP synthase subunit C"/>
    <property type="match status" value="1"/>
</dbReference>
<dbReference type="PROSITE" id="PS00605">
    <property type="entry name" value="ATPASE_C"/>
    <property type="match status" value="1"/>
</dbReference>
<reference key="1">
    <citation type="journal article" date="2006" name="Proc. Natl. Acad. Sci. U.S.A.">
        <title>Comparative genomics of the lactic acid bacteria.</title>
        <authorList>
            <person name="Makarova K.S."/>
            <person name="Slesarev A."/>
            <person name="Wolf Y.I."/>
            <person name="Sorokin A."/>
            <person name="Mirkin B."/>
            <person name="Koonin E.V."/>
            <person name="Pavlov A."/>
            <person name="Pavlova N."/>
            <person name="Karamychev V."/>
            <person name="Polouchine N."/>
            <person name="Shakhova V."/>
            <person name="Grigoriev I."/>
            <person name="Lou Y."/>
            <person name="Rohksar D."/>
            <person name="Lucas S."/>
            <person name="Huang K."/>
            <person name="Goodstein D.M."/>
            <person name="Hawkins T."/>
            <person name="Plengvidhya V."/>
            <person name="Welker D."/>
            <person name="Hughes J."/>
            <person name="Goh Y."/>
            <person name="Benson A."/>
            <person name="Baldwin K."/>
            <person name="Lee J.-H."/>
            <person name="Diaz-Muniz I."/>
            <person name="Dosti B."/>
            <person name="Smeianov V."/>
            <person name="Wechter W."/>
            <person name="Barabote R."/>
            <person name="Lorca G."/>
            <person name="Altermann E."/>
            <person name="Barrangou R."/>
            <person name="Ganesan B."/>
            <person name="Xie Y."/>
            <person name="Rawsthorne H."/>
            <person name="Tamir D."/>
            <person name="Parker C."/>
            <person name="Breidt F."/>
            <person name="Broadbent J.R."/>
            <person name="Hutkins R."/>
            <person name="O'Sullivan D."/>
            <person name="Steele J."/>
            <person name="Unlu G."/>
            <person name="Saier M.H. Jr."/>
            <person name="Klaenhammer T."/>
            <person name="Richardson P."/>
            <person name="Kozyavkin S."/>
            <person name="Weimer B.C."/>
            <person name="Mills D.A."/>
        </authorList>
    </citation>
    <scope>NUCLEOTIDE SEQUENCE [LARGE SCALE GENOMIC DNA]</scope>
    <source>
        <strain>ATCC 367 / BCRC 12310 / CIP 105137 / JCM 1170 / LMG 11437 / NCIMB 947 / NCTC 947</strain>
    </source>
</reference>
<organism>
    <name type="scientific">Levilactobacillus brevis (strain ATCC 367 / BCRC 12310 / CIP 105137 / JCM 1170 / LMG 11437 / NCIMB 947 / NCTC 947)</name>
    <name type="common">Lactobacillus brevis</name>
    <dbReference type="NCBI Taxonomy" id="387344"/>
    <lineage>
        <taxon>Bacteria</taxon>
        <taxon>Bacillati</taxon>
        <taxon>Bacillota</taxon>
        <taxon>Bacilli</taxon>
        <taxon>Lactobacillales</taxon>
        <taxon>Lactobacillaceae</taxon>
        <taxon>Levilactobacillus</taxon>
    </lineage>
</organism>
<protein>
    <recommendedName>
        <fullName evidence="1">ATP synthase subunit c</fullName>
    </recommendedName>
    <alternativeName>
        <fullName evidence="1">ATP synthase F(0) sector subunit c</fullName>
    </alternativeName>
    <alternativeName>
        <fullName evidence="1">F-type ATPase subunit c</fullName>
        <shortName evidence="1">F-ATPase subunit c</shortName>
    </alternativeName>
    <alternativeName>
        <fullName evidence="1">Lipid-binding protein</fullName>
    </alternativeName>
</protein>
<accession>Q03QY3</accession>
<gene>
    <name evidence="1" type="primary">atpE</name>
    <name type="ordered locus">LVIS_1284</name>
</gene>
<evidence type="ECO:0000255" key="1">
    <source>
        <dbReference type="HAMAP-Rule" id="MF_01396"/>
    </source>
</evidence>
<proteinExistence type="inferred from homology"/>